<reference key="1">
    <citation type="journal article" date="2006" name="Proc. Natl. Acad. Sci. U.S.A.">
        <title>Genome reduction in Leptospira borgpetersenii reflects limited transmission potential.</title>
        <authorList>
            <person name="Bulach D.M."/>
            <person name="Zuerner R.L."/>
            <person name="Wilson P."/>
            <person name="Seemann T."/>
            <person name="McGrath A."/>
            <person name="Cullen P.A."/>
            <person name="Davis J."/>
            <person name="Johnson M."/>
            <person name="Kuczek E."/>
            <person name="Alt D.P."/>
            <person name="Peterson-Burch B."/>
            <person name="Coppel R.L."/>
            <person name="Rood J.I."/>
            <person name="Davies J.K."/>
            <person name="Adler B."/>
        </authorList>
    </citation>
    <scope>NUCLEOTIDE SEQUENCE [LARGE SCALE GENOMIC DNA]</scope>
    <source>
        <strain>L550</strain>
    </source>
</reference>
<accession>Q053M6</accession>
<dbReference type="EC" id="4.2.1.20" evidence="1"/>
<dbReference type="EMBL" id="CP000348">
    <property type="protein sequence ID" value="ABJ78469.1"/>
    <property type="molecule type" value="Genomic_DNA"/>
</dbReference>
<dbReference type="RefSeq" id="WP_011669754.1">
    <property type="nucleotide sequence ID" value="NC_008508.1"/>
</dbReference>
<dbReference type="SMR" id="Q053M6"/>
<dbReference type="KEGG" id="lbl:LBL_0928"/>
<dbReference type="HOGENOM" id="CLU_016734_3_1_12"/>
<dbReference type="UniPathway" id="UPA00035">
    <property type="reaction ID" value="UER00044"/>
</dbReference>
<dbReference type="GO" id="GO:0005737">
    <property type="term" value="C:cytoplasm"/>
    <property type="evidence" value="ECO:0007669"/>
    <property type="project" value="TreeGrafter"/>
</dbReference>
<dbReference type="GO" id="GO:0004834">
    <property type="term" value="F:tryptophan synthase activity"/>
    <property type="evidence" value="ECO:0007669"/>
    <property type="project" value="UniProtKB-UniRule"/>
</dbReference>
<dbReference type="CDD" id="cd06446">
    <property type="entry name" value="Trp-synth_B"/>
    <property type="match status" value="1"/>
</dbReference>
<dbReference type="FunFam" id="3.40.50.1100:FF:000001">
    <property type="entry name" value="Tryptophan synthase beta chain"/>
    <property type="match status" value="1"/>
</dbReference>
<dbReference type="FunFam" id="3.40.50.1100:FF:000004">
    <property type="entry name" value="Tryptophan synthase beta chain"/>
    <property type="match status" value="1"/>
</dbReference>
<dbReference type="Gene3D" id="3.40.50.1100">
    <property type="match status" value="2"/>
</dbReference>
<dbReference type="HAMAP" id="MF_00133">
    <property type="entry name" value="Trp_synth_beta"/>
    <property type="match status" value="1"/>
</dbReference>
<dbReference type="InterPro" id="IPR006653">
    <property type="entry name" value="Trp_synth_b_CS"/>
</dbReference>
<dbReference type="InterPro" id="IPR006654">
    <property type="entry name" value="Trp_synth_beta"/>
</dbReference>
<dbReference type="InterPro" id="IPR023026">
    <property type="entry name" value="Trp_synth_beta/beta-like"/>
</dbReference>
<dbReference type="InterPro" id="IPR001926">
    <property type="entry name" value="TrpB-like_PALP"/>
</dbReference>
<dbReference type="InterPro" id="IPR036052">
    <property type="entry name" value="TrpB-like_PALP_sf"/>
</dbReference>
<dbReference type="NCBIfam" id="TIGR00263">
    <property type="entry name" value="trpB"/>
    <property type="match status" value="1"/>
</dbReference>
<dbReference type="PANTHER" id="PTHR48077:SF3">
    <property type="entry name" value="TRYPTOPHAN SYNTHASE"/>
    <property type="match status" value="1"/>
</dbReference>
<dbReference type="PANTHER" id="PTHR48077">
    <property type="entry name" value="TRYPTOPHAN SYNTHASE-RELATED"/>
    <property type="match status" value="1"/>
</dbReference>
<dbReference type="Pfam" id="PF00291">
    <property type="entry name" value="PALP"/>
    <property type="match status" value="1"/>
</dbReference>
<dbReference type="PIRSF" id="PIRSF001413">
    <property type="entry name" value="Trp_syn_beta"/>
    <property type="match status" value="1"/>
</dbReference>
<dbReference type="SUPFAM" id="SSF53686">
    <property type="entry name" value="Tryptophan synthase beta subunit-like PLP-dependent enzymes"/>
    <property type="match status" value="1"/>
</dbReference>
<dbReference type="PROSITE" id="PS00168">
    <property type="entry name" value="TRP_SYNTHASE_BETA"/>
    <property type="match status" value="1"/>
</dbReference>
<comment type="function">
    <text evidence="1">The beta subunit is responsible for the synthesis of L-tryptophan from indole and L-serine.</text>
</comment>
<comment type="catalytic activity">
    <reaction evidence="1">
        <text>(1S,2R)-1-C-(indol-3-yl)glycerol 3-phosphate + L-serine = D-glyceraldehyde 3-phosphate + L-tryptophan + H2O</text>
        <dbReference type="Rhea" id="RHEA:10532"/>
        <dbReference type="ChEBI" id="CHEBI:15377"/>
        <dbReference type="ChEBI" id="CHEBI:33384"/>
        <dbReference type="ChEBI" id="CHEBI:57912"/>
        <dbReference type="ChEBI" id="CHEBI:58866"/>
        <dbReference type="ChEBI" id="CHEBI:59776"/>
        <dbReference type="EC" id="4.2.1.20"/>
    </reaction>
</comment>
<comment type="cofactor">
    <cofactor evidence="1">
        <name>pyridoxal 5'-phosphate</name>
        <dbReference type="ChEBI" id="CHEBI:597326"/>
    </cofactor>
</comment>
<comment type="pathway">
    <text evidence="1">Amino-acid biosynthesis; L-tryptophan biosynthesis; L-tryptophan from chorismate: step 5/5.</text>
</comment>
<comment type="subunit">
    <text evidence="1">Tetramer of two alpha and two beta chains.</text>
</comment>
<comment type="similarity">
    <text evidence="1">Belongs to the TrpB family.</text>
</comment>
<organism>
    <name type="scientific">Leptospira borgpetersenii serovar Hardjo-bovis (strain L550)</name>
    <dbReference type="NCBI Taxonomy" id="355276"/>
    <lineage>
        <taxon>Bacteria</taxon>
        <taxon>Pseudomonadati</taxon>
        <taxon>Spirochaetota</taxon>
        <taxon>Spirochaetia</taxon>
        <taxon>Leptospirales</taxon>
        <taxon>Leptospiraceae</taxon>
        <taxon>Leptospira</taxon>
    </lineage>
</organism>
<proteinExistence type="inferred from homology"/>
<protein>
    <recommendedName>
        <fullName evidence="1">Tryptophan synthase beta chain</fullName>
        <ecNumber evidence="1">4.2.1.20</ecNumber>
    </recommendedName>
</protein>
<sequence>MGKVRHSPKEGYFGEFGGRYSPEILHDALAELETTYKKLKKNKHFKKELEYYRKNYIGRPSPLTYAERLTKVWDGARIWLKREDLNHTGAHKINNTIGQVLIAKAMGKTRIIAETGAGQHGVATATVGAMFQMETVVYMGEEDLRRQELNAIRMRMMGAKVVGVSSGTATLKDATSEAMRDWALNVSNTHYIVGSSIGPHPFPTIVRDFQSVIGIESRKQFKKVNGKLPNAVIACVGGGSNSIGMFYGFLRDKKVKLFGVEAGGYSTEPGHHSATIQFGRTGFLHGTKTLVIQDEFGQIVPAHSVSAGLDYPGVGPEHAYFHKSGRVTYVNVDDDGALDAFLEICQIEGIIPALETAHAFRFAKDLAKSMGKKEDILICLSGRGDKDVAEVARLRKGEFS</sequence>
<name>TRPB_LEPBL</name>
<evidence type="ECO:0000255" key="1">
    <source>
        <dbReference type="HAMAP-Rule" id="MF_00133"/>
    </source>
</evidence>
<feature type="chain" id="PRO_1000018354" description="Tryptophan synthase beta chain">
    <location>
        <begin position="1"/>
        <end position="400"/>
    </location>
</feature>
<feature type="modified residue" description="N6-(pyridoxal phosphate)lysine" evidence="1">
    <location>
        <position position="92"/>
    </location>
</feature>
<gene>
    <name evidence="1" type="primary">trpB</name>
    <name type="ordered locus">LBL_0928</name>
</gene>
<keyword id="KW-0028">Amino-acid biosynthesis</keyword>
<keyword id="KW-0057">Aromatic amino acid biosynthesis</keyword>
<keyword id="KW-0456">Lyase</keyword>
<keyword id="KW-0663">Pyridoxal phosphate</keyword>
<keyword id="KW-0822">Tryptophan biosynthesis</keyword>